<reference key="1">
    <citation type="journal article" date="2010" name="Genome Biol. Evol.">
        <title>Continuing evolution of Burkholderia mallei through genome reduction and large-scale rearrangements.</title>
        <authorList>
            <person name="Losada L."/>
            <person name="Ronning C.M."/>
            <person name="DeShazer D."/>
            <person name="Woods D."/>
            <person name="Fedorova N."/>
            <person name="Kim H.S."/>
            <person name="Shabalina S.A."/>
            <person name="Pearson T.R."/>
            <person name="Brinkac L."/>
            <person name="Tan P."/>
            <person name="Nandi T."/>
            <person name="Crabtree J."/>
            <person name="Badger J."/>
            <person name="Beckstrom-Sternberg S."/>
            <person name="Saqib M."/>
            <person name="Schutzer S.E."/>
            <person name="Keim P."/>
            <person name="Nierman W.C."/>
        </authorList>
    </citation>
    <scope>NUCLEOTIDE SEQUENCE [LARGE SCALE GENOMIC DNA]</scope>
    <source>
        <strain>NCTC 10229</strain>
    </source>
</reference>
<comment type="catalytic activity">
    <reaction evidence="1">
        <text>1-(5-phospho-beta-D-ribosyl)-ATP + H2O = 1-(5-phospho-beta-D-ribosyl)-5'-AMP + diphosphate + H(+)</text>
        <dbReference type="Rhea" id="RHEA:22828"/>
        <dbReference type="ChEBI" id="CHEBI:15377"/>
        <dbReference type="ChEBI" id="CHEBI:15378"/>
        <dbReference type="ChEBI" id="CHEBI:33019"/>
        <dbReference type="ChEBI" id="CHEBI:59457"/>
        <dbReference type="ChEBI" id="CHEBI:73183"/>
        <dbReference type="EC" id="3.6.1.31"/>
    </reaction>
</comment>
<comment type="pathway">
    <text evidence="1">Amino-acid biosynthesis; L-histidine biosynthesis; L-histidine from 5-phospho-alpha-D-ribose 1-diphosphate: step 2/9.</text>
</comment>
<comment type="subcellular location">
    <subcellularLocation>
        <location evidence="1">Cytoplasm</location>
    </subcellularLocation>
</comment>
<comment type="similarity">
    <text evidence="1">Belongs to the PRA-PH family.</text>
</comment>
<keyword id="KW-0028">Amino-acid biosynthesis</keyword>
<keyword id="KW-0067">ATP-binding</keyword>
<keyword id="KW-0963">Cytoplasm</keyword>
<keyword id="KW-0368">Histidine biosynthesis</keyword>
<keyword id="KW-0378">Hydrolase</keyword>
<keyword id="KW-0547">Nucleotide-binding</keyword>
<organism>
    <name type="scientific">Burkholderia mallei (strain NCTC 10229)</name>
    <dbReference type="NCBI Taxonomy" id="412022"/>
    <lineage>
        <taxon>Bacteria</taxon>
        <taxon>Pseudomonadati</taxon>
        <taxon>Pseudomonadota</taxon>
        <taxon>Betaproteobacteria</taxon>
        <taxon>Burkholderiales</taxon>
        <taxon>Burkholderiaceae</taxon>
        <taxon>Burkholderia</taxon>
        <taxon>pseudomallei group</taxon>
    </lineage>
</organism>
<name>HIS2_BURM9</name>
<proteinExistence type="inferred from homology"/>
<protein>
    <recommendedName>
        <fullName evidence="1">Phosphoribosyl-ATP pyrophosphatase</fullName>
        <shortName evidence="1">PRA-PH</shortName>
        <ecNumber evidence="1">3.6.1.31</ecNumber>
    </recommendedName>
</protein>
<accession>A2S756</accession>
<sequence>MTQSTTEDTLLRLAAVIDSRKGGDPEQSYVSRLFHKGDDAILKKIGEEATEVVLAAKDVRQGGAPSALVGEVADLWFHCLVALSHFDLSPADVIAELERREGMSGIEEKALRKRREREENGG</sequence>
<evidence type="ECO:0000255" key="1">
    <source>
        <dbReference type="HAMAP-Rule" id="MF_01020"/>
    </source>
</evidence>
<dbReference type="EC" id="3.6.1.31" evidence="1"/>
<dbReference type="EMBL" id="CP000546">
    <property type="protein sequence ID" value="ABN01900.1"/>
    <property type="molecule type" value="Genomic_DNA"/>
</dbReference>
<dbReference type="RefSeq" id="WP_004202813.1">
    <property type="nucleotide sequence ID" value="NC_008836.1"/>
</dbReference>
<dbReference type="SMR" id="A2S756"/>
<dbReference type="KEGG" id="bml:BMA10229_A1796"/>
<dbReference type="HOGENOM" id="CLU_123337_1_2_4"/>
<dbReference type="UniPathway" id="UPA00031">
    <property type="reaction ID" value="UER00007"/>
</dbReference>
<dbReference type="Proteomes" id="UP000002283">
    <property type="component" value="Chromosome I"/>
</dbReference>
<dbReference type="GO" id="GO:0005737">
    <property type="term" value="C:cytoplasm"/>
    <property type="evidence" value="ECO:0007669"/>
    <property type="project" value="UniProtKB-SubCell"/>
</dbReference>
<dbReference type="GO" id="GO:0005524">
    <property type="term" value="F:ATP binding"/>
    <property type="evidence" value="ECO:0007669"/>
    <property type="project" value="UniProtKB-KW"/>
</dbReference>
<dbReference type="GO" id="GO:0004636">
    <property type="term" value="F:phosphoribosyl-ATP diphosphatase activity"/>
    <property type="evidence" value="ECO:0007669"/>
    <property type="project" value="UniProtKB-UniRule"/>
</dbReference>
<dbReference type="GO" id="GO:0000105">
    <property type="term" value="P:L-histidine biosynthetic process"/>
    <property type="evidence" value="ECO:0007669"/>
    <property type="project" value="UniProtKB-UniRule"/>
</dbReference>
<dbReference type="CDD" id="cd11534">
    <property type="entry name" value="NTP-PPase_HisIE_like"/>
    <property type="match status" value="1"/>
</dbReference>
<dbReference type="Gene3D" id="1.10.287.1080">
    <property type="entry name" value="MazG-like"/>
    <property type="match status" value="1"/>
</dbReference>
<dbReference type="HAMAP" id="MF_01020">
    <property type="entry name" value="HisE"/>
    <property type="match status" value="1"/>
</dbReference>
<dbReference type="InterPro" id="IPR008179">
    <property type="entry name" value="HisE"/>
</dbReference>
<dbReference type="InterPro" id="IPR021130">
    <property type="entry name" value="PRib-ATP_PPHydrolase-like"/>
</dbReference>
<dbReference type="NCBIfam" id="TIGR03188">
    <property type="entry name" value="histidine_hisI"/>
    <property type="match status" value="1"/>
</dbReference>
<dbReference type="NCBIfam" id="NF001611">
    <property type="entry name" value="PRK00400.1-3"/>
    <property type="match status" value="1"/>
</dbReference>
<dbReference type="PANTHER" id="PTHR42945">
    <property type="entry name" value="HISTIDINE BIOSYNTHESIS BIFUNCTIONAL PROTEIN"/>
    <property type="match status" value="1"/>
</dbReference>
<dbReference type="PANTHER" id="PTHR42945:SF9">
    <property type="entry name" value="HISTIDINE BIOSYNTHESIS BIFUNCTIONAL PROTEIN HISIE"/>
    <property type="match status" value="1"/>
</dbReference>
<dbReference type="Pfam" id="PF01503">
    <property type="entry name" value="PRA-PH"/>
    <property type="match status" value="1"/>
</dbReference>
<dbReference type="SUPFAM" id="SSF101386">
    <property type="entry name" value="all-alpha NTP pyrophosphatases"/>
    <property type="match status" value="1"/>
</dbReference>
<feature type="chain" id="PRO_1000063328" description="Phosphoribosyl-ATP pyrophosphatase">
    <location>
        <begin position="1"/>
        <end position="122"/>
    </location>
</feature>
<gene>
    <name evidence="1" type="primary">hisE</name>
    <name type="ordered locus">BMA10229_A1796</name>
</gene>